<dbReference type="EMBL" id="D10370">
    <property type="protein sequence ID" value="BAA01201.1"/>
    <property type="molecule type" value="Genomic_RNA"/>
</dbReference>
<dbReference type="EMBL" id="J02231">
    <property type="status" value="NOT_ANNOTATED_CDS"/>
    <property type="molecule type" value="Genomic_RNA"/>
</dbReference>
<dbReference type="PIR" id="A29377">
    <property type="entry name" value="GNVULC"/>
</dbReference>
<dbReference type="SMR" id="P09612"/>
<dbReference type="TCDB" id="1.G.20.1.4">
    <property type="family name" value="the hantavirus gc envelope fusion glycoprotein (gc-efg) family"/>
</dbReference>
<dbReference type="GlyCosmos" id="P09612">
    <property type="glycosylation" value="3 sites, No reported glycans"/>
</dbReference>
<dbReference type="Proteomes" id="UP000232774">
    <property type="component" value="Genome"/>
</dbReference>
<dbReference type="GO" id="GO:0044167">
    <property type="term" value="C:host cell endoplasmic reticulum membrane"/>
    <property type="evidence" value="ECO:0007669"/>
    <property type="project" value="UniProtKB-SubCell"/>
</dbReference>
<dbReference type="GO" id="GO:0044178">
    <property type="term" value="C:host cell Golgi membrane"/>
    <property type="evidence" value="ECO:0007669"/>
    <property type="project" value="UniProtKB-SubCell"/>
</dbReference>
<dbReference type="GO" id="GO:0016020">
    <property type="term" value="C:membrane"/>
    <property type="evidence" value="ECO:0007669"/>
    <property type="project" value="UniProtKB-KW"/>
</dbReference>
<dbReference type="GO" id="GO:0055036">
    <property type="term" value="C:virion membrane"/>
    <property type="evidence" value="ECO:0007669"/>
    <property type="project" value="UniProtKB-SubCell"/>
</dbReference>
<dbReference type="GO" id="GO:0039654">
    <property type="term" value="P:fusion of virus membrane with host endosome membrane"/>
    <property type="evidence" value="ECO:0007669"/>
    <property type="project" value="UniProtKB-KW"/>
</dbReference>
<dbReference type="GO" id="GO:0046718">
    <property type="term" value="P:symbiont entry into host cell"/>
    <property type="evidence" value="ECO:0007669"/>
    <property type="project" value="UniProtKB-KW"/>
</dbReference>
<dbReference type="GO" id="GO:0044003">
    <property type="term" value="P:symbiont-mediated perturbation of host process"/>
    <property type="evidence" value="ECO:0007669"/>
    <property type="project" value="InterPro"/>
</dbReference>
<dbReference type="GO" id="GO:0019062">
    <property type="term" value="P:virion attachment to host cell"/>
    <property type="evidence" value="ECO:0007669"/>
    <property type="project" value="UniProtKB-KW"/>
</dbReference>
<dbReference type="InterPro" id="IPR005167">
    <property type="entry name" value="Bunya_G1"/>
</dbReference>
<dbReference type="InterPro" id="IPR005168">
    <property type="entry name" value="Bunya_G2"/>
</dbReference>
<dbReference type="InterPro" id="IPR026400">
    <property type="entry name" value="Bunya_nonstruc_pro_NSm"/>
</dbReference>
<dbReference type="InterPro" id="IPR014413">
    <property type="entry name" value="M_poly_OrthobunV"/>
</dbReference>
<dbReference type="NCBIfam" id="TIGR04210">
    <property type="entry name" value="bunya_NSm"/>
    <property type="match status" value="1"/>
</dbReference>
<dbReference type="Pfam" id="PF03557">
    <property type="entry name" value="Bunya_G1"/>
    <property type="match status" value="1"/>
</dbReference>
<dbReference type="Pfam" id="PF03563">
    <property type="entry name" value="Bunya_G2"/>
    <property type="match status" value="1"/>
</dbReference>
<dbReference type="PIRSF" id="PIRSF003944">
    <property type="entry name" value="M_poly_OrthobunV"/>
    <property type="match status" value="1"/>
</dbReference>
<feature type="signal peptide" evidence="3">
    <location>
        <begin position="1"/>
        <end position="13"/>
    </location>
</feature>
<feature type="chain" id="PRO_0000036790" description="Envelopment polyprotein">
    <location>
        <begin position="14"/>
        <end position="1441"/>
    </location>
</feature>
<feature type="chain" id="PRO_0000036791" description="Glycoprotein N" evidence="1">
    <location>
        <begin position="22"/>
        <end position="299"/>
    </location>
</feature>
<feature type="chain" id="PRO_0000036792" description="Non-structural protein M" evidence="1">
    <location>
        <begin position="300"/>
        <end position="473"/>
    </location>
</feature>
<feature type="chain" id="PRO_0000036793" description="Glycoprotein C" evidence="1">
    <location>
        <begin position="474"/>
        <end position="1441"/>
    </location>
</feature>
<feature type="topological domain" description="Lumenal" evidence="3">
    <location>
        <begin position="14"/>
        <end position="200"/>
    </location>
</feature>
<feature type="transmembrane region" description="Helical" evidence="3">
    <location>
        <begin position="201"/>
        <end position="221"/>
    </location>
</feature>
<feature type="topological domain" description="Cytoplasmic" evidence="3">
    <location>
        <begin position="222"/>
        <end position="305"/>
    </location>
</feature>
<feature type="transmembrane region" description="Helical" evidence="3">
    <location>
        <begin position="306"/>
        <end position="326"/>
    </location>
</feature>
<feature type="topological domain" description="Lumenal" evidence="3">
    <location>
        <begin position="327"/>
        <end position="365"/>
    </location>
</feature>
<feature type="transmembrane region" description="Helical" evidence="3">
    <location>
        <begin position="366"/>
        <end position="386"/>
    </location>
</feature>
<feature type="topological domain" description="Cytoplasmic" evidence="3">
    <location>
        <begin position="387"/>
        <end position="452"/>
    </location>
</feature>
<feature type="transmembrane region" description="Helical" evidence="3">
    <location>
        <begin position="453"/>
        <end position="473"/>
    </location>
</feature>
<feature type="topological domain" description="Lumenal" evidence="3">
    <location>
        <begin position="474"/>
        <end position="1395"/>
    </location>
</feature>
<feature type="transmembrane region" description="Helical" evidence="3">
    <location>
        <begin position="1396"/>
        <end position="1416"/>
    </location>
</feature>
<feature type="topological domain" description="Cytoplasmic" evidence="3">
    <location>
        <begin position="1417"/>
        <end position="1441"/>
    </location>
</feature>
<feature type="site" description="Cleavage; by host signal peptidase" evidence="1">
    <location>
        <begin position="473"/>
        <end position="474"/>
    </location>
</feature>
<feature type="glycosylation site" description="N-linked (GlcNAc...) asparagine; by host" evidence="3">
    <location>
        <position position="57"/>
    </location>
</feature>
<feature type="glycosylation site" description="N-linked (GlcNAc...) asparagine; by host" evidence="3">
    <location>
        <position position="490"/>
    </location>
</feature>
<feature type="glycosylation site" description="N-linked (GlcNAc...) asparagine; by host" evidence="3">
    <location>
        <position position="1177"/>
    </location>
</feature>
<feature type="sequence conflict" description="In Ref. 2." evidence="4" ref="2">
    <original>C</original>
    <variation>S</variation>
    <location>
        <position position="40"/>
    </location>
</feature>
<organism>
    <name type="scientific">Bunyavirus La Crosse</name>
    <dbReference type="NCBI Taxonomy" id="11577"/>
    <lineage>
        <taxon>Viruses</taxon>
        <taxon>Riboviria</taxon>
        <taxon>Orthornavirae</taxon>
        <taxon>Negarnaviricota</taxon>
        <taxon>Polyploviricotina</taxon>
        <taxon>Ellioviricetes</taxon>
        <taxon>Bunyavirales</taxon>
        <taxon>Peribunyaviridae</taxon>
        <taxon>Orthobunyavirus</taxon>
        <taxon>Orthobunyavirus lacrosseense</taxon>
    </lineage>
</organism>
<name>GP_BUNLC</name>
<proteinExistence type="inferred from homology"/>
<organismHost>
    <name type="scientific">Cervidae</name>
    <name type="common">Deer</name>
    <dbReference type="NCBI Taxonomy" id="9850"/>
</organismHost>
<organismHost>
    <name type="scientific">Homo sapiens</name>
    <name type="common">Human</name>
    <dbReference type="NCBI Taxonomy" id="9606"/>
</organismHost>
<organismHost>
    <name type="scientific">Ochlerotatus triseriatus</name>
    <name type="common">Eastern treehole mosquito</name>
    <name type="synonym">Aedes triseriatus</name>
    <dbReference type="NCBI Taxonomy" id="7162"/>
</organismHost>
<organismHost>
    <name type="scientific">Tamias</name>
    <dbReference type="NCBI Taxonomy" id="13712"/>
</organismHost>
<comment type="function">
    <text evidence="1">Glycoprotein C and Glycoprotein N interact with each other and are present at the surface of the virion. They are able to attach the virion to a cell receptor and to promote fusion of membranes after endocytosis of the virion (By similarity).</text>
</comment>
<comment type="subunit">
    <text evidence="1">Glycoprotein C and Glycoprotein N interact with each other.</text>
</comment>
<comment type="subcellular location">
    <molecule>Glycoprotein C</molecule>
    <subcellularLocation>
        <location evidence="4">Virion membrane</location>
        <topology evidence="4">Single-pass type I membrane protein</topology>
    </subcellularLocation>
    <subcellularLocation>
        <location evidence="4">Host Golgi apparatus membrane</location>
        <topology evidence="4">Single-pass type I membrane protein</topology>
    </subcellularLocation>
    <subcellularLocation>
        <location evidence="4">Host endoplasmic reticulum membrane</location>
        <topology evidence="4">Single-pass type I membrane protein</topology>
    </subcellularLocation>
    <text evidence="1">Glycoprotein C alone is retained in the membrane of the endoplasmic reticulum, but not transported to the Golgi. Coexpression of Glycoprotein C and Glycoprotein N results in efficient transport of Glycoprotein C to the Golgi complex, indicating thattheir interaction is essential for proper targeting to this organelle, where virion budding occurs (By similarity).</text>
</comment>
<comment type="subcellular location">
    <molecule>Glycoprotein N</molecule>
    <subcellularLocation>
        <location evidence="4">Virion membrane</location>
        <topology evidence="4">Single-pass type I membrane protein</topology>
    </subcellularLocation>
    <subcellularLocation>
        <location evidence="4">Host Golgi apparatus membrane</location>
        <topology evidence="4">Single-pass type I membrane protein</topology>
    </subcellularLocation>
    <text evidence="1">Glycoprotein N is retained in the Golgi complex through a Golgi retention signal, which resides in the Glycoprotein N transmembrane region.</text>
</comment>
<comment type="subcellular location">
    <molecule>Non-structural protein M</molecule>
    <subcellularLocation>
        <location evidence="4">Host Golgi apparatus membrane</location>
        <topology evidence="4">Multi-pass membrane protein</topology>
    </subcellularLocation>
</comment>
<comment type="PTM">
    <text>Specific enzymatic cleavages in vivo yield mature proteins including nonstructural protein NSm, glycoprotein C, and glycoprotein N.</text>
</comment>
<comment type="similarity">
    <text evidence="4">Belongs to the orthobunyavirus envelope glycoprotein family.</text>
</comment>
<reference key="1">
    <citation type="journal article" date="1987" name="J. Gen. Virol.">
        <title>The sequence of the M RNA of an isolate of La Crosse virus.</title>
        <authorList>
            <person name="Grady L.J."/>
            <person name="Sanders M.L."/>
            <person name="Campbell W.P."/>
        </authorList>
    </citation>
    <scope>NUCLEOTIDE SEQUENCE [GENOMIC RNA]</scope>
    <source>
        <strain>isolate Aedes triseriatus/United States/L74/1974</strain>
    </source>
</reference>
<reference key="2">
    <citation type="journal article" date="1982" name="J. Virol.">
        <title>Nucleotide sequence analyses and predicted coding of bunyavirus genome RNA species.</title>
        <authorList>
            <person name="Clerx-Van Haaster C.M."/>
            <person name="Akashi H."/>
            <person name="Auperin D.D."/>
            <person name="Bishop D.H.L."/>
        </authorList>
    </citation>
    <scope>NUCLEOTIDE SEQUENCE [GENOMIC RNA] OF 1-46</scope>
</reference>
<keyword id="KW-1170">Fusion of virus membrane with host endosomal membrane</keyword>
<keyword id="KW-1168">Fusion of virus membrane with host membrane</keyword>
<keyword id="KW-0325">Glycoprotein</keyword>
<keyword id="KW-1038">Host endoplasmic reticulum</keyword>
<keyword id="KW-1040">Host Golgi apparatus</keyword>
<keyword id="KW-1043">Host membrane</keyword>
<keyword id="KW-0945">Host-virus interaction</keyword>
<keyword id="KW-0472">Membrane</keyword>
<keyword id="KW-1185">Reference proteome</keyword>
<keyword id="KW-0732">Signal</keyword>
<keyword id="KW-0812">Transmembrane</keyword>
<keyword id="KW-1133">Transmembrane helix</keyword>
<keyword id="KW-1161">Viral attachment to host cell</keyword>
<keyword id="KW-1162">Viral penetration into host cytoplasm</keyword>
<keyword id="KW-0946">Virion</keyword>
<keyword id="KW-1160">Virus entry into host cell</keyword>
<accession>P09612</accession>
<evidence type="ECO:0000250" key="1"/>
<evidence type="ECO:0000250" key="2">
    <source>
        <dbReference type="UniProtKB" id="P04505"/>
    </source>
</evidence>
<evidence type="ECO:0000255" key="3"/>
<evidence type="ECO:0000305" key="4"/>
<sequence length="1441" mass="162541">MIRMLVLIVVTAASPVYQRCFQDGAIVKQNPSKEAVTEVCLKDDVSMIKTEARYVKNATGVFSNNVAIRKWLVSDWHDCRPKKIVGGHINVIEVGDDLSLHTESYVCSADCTIGVDKETAQVRLQTDTTNHFEIAGTTVKSGWFKSTTYITLDQTCEHLKVSCAPKSVQFHACFNQHMSCVRFLHRTILPGSIANSICQNIEIIILVTLTLLIFILLSILSKTYICYLLMPIFIPIAYMYGVIYNKSCKKCKLCGLVYHPFTECGTHCVCGARYDTSDRMKLHRASGLCPGYKSLRAARVMCKSKGPASILSIITAVLVLTFVTPINSMVLGESKETFELEELPDDMLEMALRINSYYFTCILNYAVSWGLIIAGLLVGLIFKKYQHRFLNIYAMYCEECNMYHDKSGLKRHGDFTNKCRQCTCGQYEDATGLITHRKTYNCLVQYKAKWMMNFLIIYIFLILIKDSAIVGQATGTDFTTCLETESINWNCTGPFLNLGNCQKQQKKEPYTNIATQLKGLKAISVLDIPIITSIPDDIAGALRYIEEKEDFHVQLTTEYAMLSKYCDYYTQFSDNSGYSQTTWRVYLRSHDFEACILYPNQHFCKCVKNGEKCSSSNWDFANGMKNYYSGKQAKFDKDLNLALTALHHAFRGTSSAYIAAMLSKKSNDDLIAYTNKIKAKFPGNALLKAIIDYIAYMKGLPEMANFKYDEFWDELLYKPNPAKASNLARGKESSYNFKLAISSKSIKTCKNVKDVACLSPRSGAIYSSIIACGEPNGPSVYRKPSGGVFQSSTDRSIYCLLDSHCLEEFEAISQEELDAVKKSKCWEIEYPDVRPLQESDGAKSCRMKDSGNCNVATNRWPVMQCENDKFYYSELQKDYDKTQDIGHYCLSPGCTTIRYPINPKHISNCNWQVSRSSIAKIDVHNVEDIEQYKKAITQKLQTSLSLFKYAKTKNLPHIRPIYKYITMKETETAEGIESAYIESEVPALAGTSVGFKINSKEGKHLLDVIAYVKSASYSSVYAKLYSTGPTSGINTKHDELCTGPCPANINHQVGWLTFARERTSSWGCEEFGCLAVSDGCVFGSCQDIIKEELSVYRKETEEVTNVELCLTFSDKTYCTNLNPVTPIITDLFEVQFKTVETYSLPRIVAVQNHEIKIGQINDLGVYSKGCGNVQKVNGTVYGNGVPRFDYLCHLASRKEVIVRKCFDNDYQACKFLQSPASYRLEEDSGTVTIIDYKKILGTIKMKAILGDVKYKTFADSVDITAEGSCAGCINCFQNIHCELTLHTTIEASCPIKSSCTVFHDRILVTPNEHKYALKIVCTEKPGNTLTIKVCNTRIEASMALVDAKPIIELAPVDQTAYIREKDERCKTWMCRVRDEGLQVILEPFKNLFGSYIGIFYTFIISIIALLVIIYVLLPICFKLRDTLRKHDDAYKREMKIR</sequence>
<protein>
    <recommendedName>
        <fullName>Envelopment polyprotein</fullName>
    </recommendedName>
    <alternativeName>
        <fullName>M polyprotein</fullName>
    </alternativeName>
    <component>
        <recommendedName>
            <fullName evidence="2">Glycoprotein N</fullName>
            <shortName>Gn</shortName>
        </recommendedName>
        <alternativeName>
            <fullName>Glycoprotein G2</fullName>
        </alternativeName>
    </component>
    <component>
        <recommendedName>
            <fullName evidence="2">Non-structural protein M</fullName>
            <shortName>NSm</shortName>
        </recommendedName>
    </component>
    <component>
        <recommendedName>
            <fullName evidence="2">Glycoprotein C</fullName>
            <shortName>Gc</shortName>
        </recommendedName>
        <alternativeName>
            <fullName>Glycoprotein G1</fullName>
        </alternativeName>
    </component>
</protein>
<gene>
    <name type="primary">GP</name>
</gene>